<sequence>MSKPVNLVLLYGGKSGEHEVSLVSAASVLKHLDSEKYHIIPIAMDKSGRFHRHDYNDLLACSDKLPVVTEKSTPLEGLLINGRLAVDAEIVFPVVHGPLYEDGCLQGLLELAGVAYVGCDVLSSAIGMDKDMARRLACINGLKSARYKLLSWHANASERQQFCHEVASEFGWPLFVKPCSLGSSVGIHKANNMDELNAAVADALRYDEEILVEEFIVGREIELAVLENSIPCGKPRVSMVGEIKVNHPDGYYSYTAKYLESSQTDLIIPAQLNNSLEEQLKQAAANIFSYLKCKGMARVDFFVNDKTEEIYFNEINTLPGFTSISMYPKLWQATGVAYPDLLDELINLAMVHHNCRQHLVTNYL</sequence>
<reference key="1">
    <citation type="journal article" date="2004" name="Nat. Genet.">
        <title>Evidence in the Legionella pneumophila genome for exploitation of host cell functions and high genome plasticity.</title>
        <authorList>
            <person name="Cazalet C."/>
            <person name="Rusniok C."/>
            <person name="Brueggemann H."/>
            <person name="Zidane N."/>
            <person name="Magnier A."/>
            <person name="Ma L."/>
            <person name="Tichit M."/>
            <person name="Jarraud S."/>
            <person name="Bouchier C."/>
            <person name="Vandenesch F."/>
            <person name="Kunst F."/>
            <person name="Etienne J."/>
            <person name="Glaser P."/>
            <person name="Buchrieser C."/>
        </authorList>
    </citation>
    <scope>NUCLEOTIDE SEQUENCE [LARGE SCALE GENOMIC DNA]</scope>
    <source>
        <strain>Paris</strain>
    </source>
</reference>
<organism>
    <name type="scientific">Legionella pneumophila (strain Paris)</name>
    <dbReference type="NCBI Taxonomy" id="297246"/>
    <lineage>
        <taxon>Bacteria</taxon>
        <taxon>Pseudomonadati</taxon>
        <taxon>Pseudomonadota</taxon>
        <taxon>Gammaproteobacteria</taxon>
        <taxon>Legionellales</taxon>
        <taxon>Legionellaceae</taxon>
        <taxon>Legionella</taxon>
    </lineage>
</organism>
<comment type="function">
    <text evidence="2">Cell wall formation.</text>
</comment>
<comment type="catalytic activity">
    <reaction evidence="2">
        <text>2 D-alanine + ATP = D-alanyl-D-alanine + ADP + phosphate + H(+)</text>
        <dbReference type="Rhea" id="RHEA:11224"/>
        <dbReference type="ChEBI" id="CHEBI:15378"/>
        <dbReference type="ChEBI" id="CHEBI:30616"/>
        <dbReference type="ChEBI" id="CHEBI:43474"/>
        <dbReference type="ChEBI" id="CHEBI:57416"/>
        <dbReference type="ChEBI" id="CHEBI:57822"/>
        <dbReference type="ChEBI" id="CHEBI:456216"/>
        <dbReference type="EC" id="6.3.2.4"/>
    </reaction>
</comment>
<comment type="cofactor">
    <cofactor evidence="1">
        <name>Mg(2+)</name>
        <dbReference type="ChEBI" id="CHEBI:18420"/>
    </cofactor>
    <cofactor evidence="1">
        <name>Mn(2+)</name>
        <dbReference type="ChEBI" id="CHEBI:29035"/>
    </cofactor>
    <text evidence="1">Binds 2 magnesium or manganese ions per subunit.</text>
</comment>
<comment type="pathway">
    <text evidence="2">Cell wall biogenesis; peptidoglycan biosynthesis.</text>
</comment>
<comment type="subcellular location">
    <subcellularLocation>
        <location evidence="2">Cytoplasm</location>
    </subcellularLocation>
</comment>
<comment type="similarity">
    <text evidence="2">Belongs to the D-alanine--D-alanine ligase family.</text>
</comment>
<keyword id="KW-0067">ATP-binding</keyword>
<keyword id="KW-0133">Cell shape</keyword>
<keyword id="KW-0961">Cell wall biogenesis/degradation</keyword>
<keyword id="KW-0963">Cytoplasm</keyword>
<keyword id="KW-0436">Ligase</keyword>
<keyword id="KW-0460">Magnesium</keyword>
<keyword id="KW-0464">Manganese</keyword>
<keyword id="KW-0479">Metal-binding</keyword>
<keyword id="KW-0547">Nucleotide-binding</keyword>
<keyword id="KW-0573">Peptidoglycan synthesis</keyword>
<accession>Q5X1S8</accession>
<dbReference type="EC" id="6.3.2.4" evidence="2"/>
<dbReference type="EMBL" id="CR628336">
    <property type="protein sequence ID" value="CAH13818.1"/>
    <property type="molecule type" value="Genomic_DNA"/>
</dbReference>
<dbReference type="RefSeq" id="WP_011947531.1">
    <property type="nucleotide sequence ID" value="NC_006368.1"/>
</dbReference>
<dbReference type="SMR" id="Q5X1S8"/>
<dbReference type="KEGG" id="lpp:lpp2665"/>
<dbReference type="LegioList" id="lpp2665"/>
<dbReference type="HOGENOM" id="CLU_039268_0_0_6"/>
<dbReference type="UniPathway" id="UPA00219"/>
<dbReference type="GO" id="GO:0005829">
    <property type="term" value="C:cytosol"/>
    <property type="evidence" value="ECO:0007669"/>
    <property type="project" value="TreeGrafter"/>
</dbReference>
<dbReference type="GO" id="GO:0005524">
    <property type="term" value="F:ATP binding"/>
    <property type="evidence" value="ECO:0007669"/>
    <property type="project" value="UniProtKB-KW"/>
</dbReference>
<dbReference type="GO" id="GO:0008716">
    <property type="term" value="F:D-alanine-D-alanine ligase activity"/>
    <property type="evidence" value="ECO:0007669"/>
    <property type="project" value="UniProtKB-UniRule"/>
</dbReference>
<dbReference type="GO" id="GO:0046872">
    <property type="term" value="F:metal ion binding"/>
    <property type="evidence" value="ECO:0007669"/>
    <property type="project" value="UniProtKB-KW"/>
</dbReference>
<dbReference type="GO" id="GO:0071555">
    <property type="term" value="P:cell wall organization"/>
    <property type="evidence" value="ECO:0007669"/>
    <property type="project" value="UniProtKB-KW"/>
</dbReference>
<dbReference type="GO" id="GO:0009252">
    <property type="term" value="P:peptidoglycan biosynthetic process"/>
    <property type="evidence" value="ECO:0007669"/>
    <property type="project" value="UniProtKB-UniRule"/>
</dbReference>
<dbReference type="GO" id="GO:0008360">
    <property type="term" value="P:regulation of cell shape"/>
    <property type="evidence" value="ECO:0007669"/>
    <property type="project" value="UniProtKB-KW"/>
</dbReference>
<dbReference type="FunFam" id="3.30.1490.20:FF:000007">
    <property type="entry name" value="D-alanine--D-alanine ligase"/>
    <property type="match status" value="1"/>
</dbReference>
<dbReference type="FunFam" id="3.30.470.20:FF:000008">
    <property type="entry name" value="D-alanine--D-alanine ligase"/>
    <property type="match status" value="1"/>
</dbReference>
<dbReference type="Gene3D" id="3.40.50.20">
    <property type="match status" value="1"/>
</dbReference>
<dbReference type="Gene3D" id="3.30.1490.20">
    <property type="entry name" value="ATP-grasp fold, A domain"/>
    <property type="match status" value="1"/>
</dbReference>
<dbReference type="Gene3D" id="3.30.470.20">
    <property type="entry name" value="ATP-grasp fold, B domain"/>
    <property type="match status" value="1"/>
</dbReference>
<dbReference type="HAMAP" id="MF_00047">
    <property type="entry name" value="Dala_Dala_lig"/>
    <property type="match status" value="1"/>
</dbReference>
<dbReference type="InterPro" id="IPR011761">
    <property type="entry name" value="ATP-grasp"/>
</dbReference>
<dbReference type="InterPro" id="IPR013815">
    <property type="entry name" value="ATP_grasp_subdomain_1"/>
</dbReference>
<dbReference type="InterPro" id="IPR000291">
    <property type="entry name" value="D-Ala_lig_Van_CS"/>
</dbReference>
<dbReference type="InterPro" id="IPR005905">
    <property type="entry name" value="D_ala_D_ala"/>
</dbReference>
<dbReference type="InterPro" id="IPR011095">
    <property type="entry name" value="Dala_Dala_lig_C"/>
</dbReference>
<dbReference type="InterPro" id="IPR011127">
    <property type="entry name" value="Dala_Dala_lig_N"/>
</dbReference>
<dbReference type="InterPro" id="IPR016185">
    <property type="entry name" value="PreATP-grasp_dom_sf"/>
</dbReference>
<dbReference type="NCBIfam" id="TIGR01205">
    <property type="entry name" value="D_ala_D_alaTIGR"/>
    <property type="match status" value="1"/>
</dbReference>
<dbReference type="NCBIfam" id="NF002528">
    <property type="entry name" value="PRK01966.1-4"/>
    <property type="match status" value="1"/>
</dbReference>
<dbReference type="PANTHER" id="PTHR23132">
    <property type="entry name" value="D-ALANINE--D-ALANINE LIGASE"/>
    <property type="match status" value="1"/>
</dbReference>
<dbReference type="PANTHER" id="PTHR23132:SF25">
    <property type="entry name" value="D-ALANINE--D-ALANINE LIGASE A"/>
    <property type="match status" value="1"/>
</dbReference>
<dbReference type="Pfam" id="PF07478">
    <property type="entry name" value="Dala_Dala_lig_C"/>
    <property type="match status" value="1"/>
</dbReference>
<dbReference type="Pfam" id="PF01820">
    <property type="entry name" value="Dala_Dala_lig_N"/>
    <property type="match status" value="1"/>
</dbReference>
<dbReference type="PIRSF" id="PIRSF039102">
    <property type="entry name" value="Ddl/VanB"/>
    <property type="match status" value="1"/>
</dbReference>
<dbReference type="SUPFAM" id="SSF56059">
    <property type="entry name" value="Glutathione synthetase ATP-binding domain-like"/>
    <property type="match status" value="1"/>
</dbReference>
<dbReference type="SUPFAM" id="SSF52440">
    <property type="entry name" value="PreATP-grasp domain"/>
    <property type="match status" value="1"/>
</dbReference>
<dbReference type="PROSITE" id="PS50975">
    <property type="entry name" value="ATP_GRASP"/>
    <property type="match status" value="1"/>
</dbReference>
<dbReference type="PROSITE" id="PS00844">
    <property type="entry name" value="DALA_DALA_LIGASE_2"/>
    <property type="match status" value="1"/>
</dbReference>
<protein>
    <recommendedName>
        <fullName evidence="2">D-alanine--D-alanine ligase</fullName>
        <ecNumber evidence="2">6.3.2.4</ecNumber>
    </recommendedName>
    <alternativeName>
        <fullName evidence="2">D-Ala-D-Ala ligase</fullName>
    </alternativeName>
    <alternativeName>
        <fullName evidence="2">D-alanylalanine synthetase</fullName>
    </alternativeName>
</protein>
<gene>
    <name evidence="2" type="primary">ddl</name>
    <name type="ordered locus">lpp2665</name>
</gene>
<proteinExistence type="inferred from homology"/>
<name>DDL_LEGPA</name>
<evidence type="ECO:0000250" key="1"/>
<evidence type="ECO:0000255" key="2">
    <source>
        <dbReference type="HAMAP-Rule" id="MF_00047"/>
    </source>
</evidence>
<feature type="chain" id="PRO_1000030458" description="D-alanine--D-alanine ligase">
    <location>
        <begin position="1"/>
        <end position="364"/>
    </location>
</feature>
<feature type="domain" description="ATP-grasp" evidence="2">
    <location>
        <begin position="134"/>
        <end position="347"/>
    </location>
</feature>
<feature type="binding site" evidence="2">
    <location>
        <begin position="167"/>
        <end position="222"/>
    </location>
    <ligand>
        <name>ATP</name>
        <dbReference type="ChEBI" id="CHEBI:30616"/>
    </ligand>
</feature>
<feature type="binding site" evidence="2">
    <location>
        <position position="300"/>
    </location>
    <ligand>
        <name>Mg(2+)</name>
        <dbReference type="ChEBI" id="CHEBI:18420"/>
        <label>1</label>
    </ligand>
</feature>
<feature type="binding site" evidence="2">
    <location>
        <position position="314"/>
    </location>
    <ligand>
        <name>Mg(2+)</name>
        <dbReference type="ChEBI" id="CHEBI:18420"/>
        <label>1</label>
    </ligand>
</feature>
<feature type="binding site" evidence="2">
    <location>
        <position position="314"/>
    </location>
    <ligand>
        <name>Mg(2+)</name>
        <dbReference type="ChEBI" id="CHEBI:18420"/>
        <label>2</label>
    </ligand>
</feature>
<feature type="binding site" evidence="2">
    <location>
        <position position="316"/>
    </location>
    <ligand>
        <name>Mg(2+)</name>
        <dbReference type="ChEBI" id="CHEBI:18420"/>
        <label>2</label>
    </ligand>
</feature>